<name>FLGI_LEGPL</name>
<dbReference type="EMBL" id="CR628337">
    <property type="protein sequence ID" value="CAH15470.1"/>
    <property type="molecule type" value="Genomic_DNA"/>
</dbReference>
<dbReference type="RefSeq" id="WP_011215317.1">
    <property type="nucleotide sequence ID" value="NC_006369.1"/>
</dbReference>
<dbReference type="SMR" id="Q5WX67"/>
<dbReference type="KEGG" id="lpf:lpl1231"/>
<dbReference type="LegioList" id="lpl1231"/>
<dbReference type="HOGENOM" id="CLU_045235_1_0_6"/>
<dbReference type="Proteomes" id="UP000002517">
    <property type="component" value="Chromosome"/>
</dbReference>
<dbReference type="GO" id="GO:0009428">
    <property type="term" value="C:bacterial-type flagellum basal body, distal rod, P ring"/>
    <property type="evidence" value="ECO:0007669"/>
    <property type="project" value="InterPro"/>
</dbReference>
<dbReference type="GO" id="GO:0030288">
    <property type="term" value="C:outer membrane-bounded periplasmic space"/>
    <property type="evidence" value="ECO:0007669"/>
    <property type="project" value="InterPro"/>
</dbReference>
<dbReference type="GO" id="GO:0005198">
    <property type="term" value="F:structural molecule activity"/>
    <property type="evidence" value="ECO:0007669"/>
    <property type="project" value="InterPro"/>
</dbReference>
<dbReference type="GO" id="GO:0071973">
    <property type="term" value="P:bacterial-type flagellum-dependent cell motility"/>
    <property type="evidence" value="ECO:0007669"/>
    <property type="project" value="InterPro"/>
</dbReference>
<dbReference type="HAMAP" id="MF_00416">
    <property type="entry name" value="FlgI"/>
    <property type="match status" value="1"/>
</dbReference>
<dbReference type="InterPro" id="IPR001782">
    <property type="entry name" value="Flag_FlgI"/>
</dbReference>
<dbReference type="NCBIfam" id="NF003676">
    <property type="entry name" value="PRK05303.1"/>
    <property type="match status" value="1"/>
</dbReference>
<dbReference type="PANTHER" id="PTHR30381">
    <property type="entry name" value="FLAGELLAR P-RING PERIPLASMIC PROTEIN FLGI"/>
    <property type="match status" value="1"/>
</dbReference>
<dbReference type="PANTHER" id="PTHR30381:SF0">
    <property type="entry name" value="FLAGELLAR P-RING PROTEIN"/>
    <property type="match status" value="1"/>
</dbReference>
<dbReference type="Pfam" id="PF02119">
    <property type="entry name" value="FlgI"/>
    <property type="match status" value="1"/>
</dbReference>
<dbReference type="PRINTS" id="PR01010">
    <property type="entry name" value="FLGPRINGFLGI"/>
</dbReference>
<reference key="1">
    <citation type="journal article" date="2004" name="Nat. Genet.">
        <title>Evidence in the Legionella pneumophila genome for exploitation of host cell functions and high genome plasticity.</title>
        <authorList>
            <person name="Cazalet C."/>
            <person name="Rusniok C."/>
            <person name="Brueggemann H."/>
            <person name="Zidane N."/>
            <person name="Magnier A."/>
            <person name="Ma L."/>
            <person name="Tichit M."/>
            <person name="Jarraud S."/>
            <person name="Bouchier C."/>
            <person name="Vandenesch F."/>
            <person name="Kunst F."/>
            <person name="Etienne J."/>
            <person name="Glaser P."/>
            <person name="Buchrieser C."/>
        </authorList>
    </citation>
    <scope>NUCLEOTIDE SEQUENCE [LARGE SCALE GENOMIC DNA]</scope>
    <source>
        <strain>Lens</strain>
    </source>
</reference>
<evidence type="ECO:0000255" key="1">
    <source>
        <dbReference type="HAMAP-Rule" id="MF_00416"/>
    </source>
</evidence>
<feature type="signal peptide" evidence="1">
    <location>
        <begin position="1"/>
        <end position="22"/>
    </location>
</feature>
<feature type="chain" id="PRO_0000041799" description="Flagellar P-ring protein">
    <location>
        <begin position="23"/>
        <end position="367"/>
    </location>
</feature>
<comment type="function">
    <text evidence="1">Assembles around the rod to form the L-ring and probably protects the motor/basal body from shearing forces during rotation.</text>
</comment>
<comment type="subunit">
    <text evidence="1">The basal body constitutes a major portion of the flagellar organelle and consists of four rings (L,P,S, and M) mounted on a central rod.</text>
</comment>
<comment type="subcellular location">
    <subcellularLocation>
        <location evidence="1">Periplasm</location>
    </subcellularLocation>
    <subcellularLocation>
        <location evidence="1">Bacterial flagellum basal body</location>
    </subcellularLocation>
</comment>
<comment type="similarity">
    <text evidence="1">Belongs to the FlgI family.</text>
</comment>
<gene>
    <name evidence="1" type="primary">flgI</name>
    <name type="ordered locus">lpl1231</name>
</gene>
<protein>
    <recommendedName>
        <fullName evidence="1">Flagellar P-ring protein</fullName>
    </recommendedName>
    <alternativeName>
        <fullName evidence="1">Basal body P-ring protein</fullName>
    </alternativeName>
</protein>
<keyword id="KW-0975">Bacterial flagellum</keyword>
<keyword id="KW-0574">Periplasm</keyword>
<keyword id="KW-0732">Signal</keyword>
<sequence length="367" mass="38403">MRRMLVIRWILAIHLIATQVFAERIKDIATLAGVRVNQLVGYGLVVGLSGTGDKTGTKFTEDSFANMLTQLGINVPPGVRLNSKNIAAVMVTANLSSFMKKGQTMDVNISSIGDSKSLLGGTLLLTPLKGADGRVYAMSQGNVVVSGISASGSDGSSVTVNIPSGGRIPNGATIEADIPNPFYYSNSLTYNLHTPDFTTAKRMSDAINELMGPGTAKAIDAGSVVVTAPKKLSQRVDYVSVLENIEFKPGEAMAKIIINARTGTVVISSNVIVKSAAVSHGNLVVSITETPVISQPNAFASGRTVATQQSQVNIQQKNNRAFILPKGTTLKDIVRGINAVGATPADVISILEALQQAGALSATLIVI</sequence>
<accession>Q5WX67</accession>
<organism>
    <name type="scientific">Legionella pneumophila (strain Lens)</name>
    <dbReference type="NCBI Taxonomy" id="297245"/>
    <lineage>
        <taxon>Bacteria</taxon>
        <taxon>Pseudomonadati</taxon>
        <taxon>Pseudomonadota</taxon>
        <taxon>Gammaproteobacteria</taxon>
        <taxon>Legionellales</taxon>
        <taxon>Legionellaceae</taxon>
        <taxon>Legionella</taxon>
    </lineage>
</organism>
<proteinExistence type="inferred from homology"/>